<protein>
    <recommendedName>
        <fullName evidence="2">Putative 57 kDa heat shock protein</fullName>
    </recommendedName>
</protein>
<evidence type="ECO:0000255" key="1">
    <source>
        <dbReference type="PROSITE-ProRule" id="PRU00285"/>
    </source>
</evidence>
<evidence type="ECO:0000305" key="2"/>
<evidence type="ECO:0000312" key="3">
    <source>
        <dbReference type="Araport" id="AT4G16560"/>
    </source>
</evidence>
<evidence type="ECO:0000312" key="4">
    <source>
        <dbReference type="EMBL" id="CAB10432.1"/>
    </source>
</evidence>
<proteinExistence type="inferred from homology"/>
<reference key="1">
    <citation type="journal article" date="1998" name="Nature">
        <title>Analysis of 1.9 Mb of contiguous sequence from chromosome 4 of Arabidopsis thaliana.</title>
        <authorList>
            <person name="Bevan M."/>
            <person name="Bancroft I."/>
            <person name="Bent E."/>
            <person name="Love K."/>
            <person name="Goodman H.M."/>
            <person name="Dean C."/>
            <person name="Bergkamp R."/>
            <person name="Dirkse W."/>
            <person name="van Staveren M."/>
            <person name="Stiekema W."/>
            <person name="Drost L."/>
            <person name="Ridley P."/>
            <person name="Hudson S.-A."/>
            <person name="Patel K."/>
            <person name="Murphy G."/>
            <person name="Piffanelli P."/>
            <person name="Wedler H."/>
            <person name="Wedler E."/>
            <person name="Wambutt R."/>
            <person name="Weitzenegger T."/>
            <person name="Pohl T."/>
            <person name="Terryn N."/>
            <person name="Gielen J."/>
            <person name="Villarroel R."/>
            <person name="De Clercq R."/>
            <person name="van Montagu M."/>
            <person name="Lecharny A."/>
            <person name="Aubourg S."/>
            <person name="Gy I."/>
            <person name="Kreis M."/>
            <person name="Lao N."/>
            <person name="Kavanagh T."/>
            <person name="Hempel S."/>
            <person name="Kotter P."/>
            <person name="Entian K.-D."/>
            <person name="Rieger M."/>
            <person name="Schaefer M."/>
            <person name="Funk B."/>
            <person name="Mueller-Auer S."/>
            <person name="Silvey M."/>
            <person name="James R."/>
            <person name="Monfort A."/>
            <person name="Pons A."/>
            <person name="Puigdomenech P."/>
            <person name="Douka A."/>
            <person name="Voukelatou E."/>
            <person name="Milioni D."/>
            <person name="Hatzopoulos P."/>
            <person name="Piravandi E."/>
            <person name="Obermaier B."/>
            <person name="Hilbert H."/>
            <person name="Duesterhoeft A."/>
            <person name="Moores T."/>
            <person name="Jones J.D.G."/>
            <person name="Eneva T."/>
            <person name="Palme K."/>
            <person name="Benes V."/>
            <person name="Rechmann S."/>
            <person name="Ansorge W."/>
            <person name="Cooke R."/>
            <person name="Berger C."/>
            <person name="Delseny M."/>
            <person name="Voet M."/>
            <person name="Volckaert G."/>
            <person name="Mewes H.-W."/>
            <person name="Klosterman S."/>
            <person name="Schueller C."/>
            <person name="Chalwatzis N."/>
        </authorList>
    </citation>
    <scope>NUCLEOTIDE SEQUENCE [LARGE SCALE GENOMIC DNA]</scope>
    <source>
        <strain>cv. Columbia</strain>
    </source>
</reference>
<reference key="2">
    <citation type="journal article" date="1999" name="Nature">
        <title>Sequence and analysis of chromosome 4 of the plant Arabidopsis thaliana.</title>
        <authorList>
            <person name="Mayer K.F.X."/>
            <person name="Schueller C."/>
            <person name="Wambutt R."/>
            <person name="Murphy G."/>
            <person name="Volckaert G."/>
            <person name="Pohl T."/>
            <person name="Duesterhoeft A."/>
            <person name="Stiekema W."/>
            <person name="Entian K.-D."/>
            <person name="Terryn N."/>
            <person name="Harris B."/>
            <person name="Ansorge W."/>
            <person name="Brandt P."/>
            <person name="Grivell L.A."/>
            <person name="Rieger M."/>
            <person name="Weichselgartner M."/>
            <person name="de Simone V."/>
            <person name="Obermaier B."/>
            <person name="Mache R."/>
            <person name="Mueller M."/>
            <person name="Kreis M."/>
            <person name="Delseny M."/>
            <person name="Puigdomenech P."/>
            <person name="Watson M."/>
            <person name="Schmidtheini T."/>
            <person name="Reichert B."/>
            <person name="Portetelle D."/>
            <person name="Perez-Alonso M."/>
            <person name="Boutry M."/>
            <person name="Bancroft I."/>
            <person name="Vos P."/>
            <person name="Hoheisel J."/>
            <person name="Zimmermann W."/>
            <person name="Wedler H."/>
            <person name="Ridley P."/>
            <person name="Langham S.-A."/>
            <person name="McCullagh B."/>
            <person name="Bilham L."/>
            <person name="Robben J."/>
            <person name="van der Schueren J."/>
            <person name="Grymonprez B."/>
            <person name="Chuang Y.-J."/>
            <person name="Vandenbussche F."/>
            <person name="Braeken M."/>
            <person name="Weltjens I."/>
            <person name="Voet M."/>
            <person name="Bastiaens I."/>
            <person name="Aert R."/>
            <person name="Defoor E."/>
            <person name="Weitzenegger T."/>
            <person name="Bothe G."/>
            <person name="Ramsperger U."/>
            <person name="Hilbert H."/>
            <person name="Braun M."/>
            <person name="Holzer E."/>
            <person name="Brandt A."/>
            <person name="Peters S."/>
            <person name="van Staveren M."/>
            <person name="Dirkse W."/>
            <person name="Mooijman P."/>
            <person name="Klein Lankhorst R."/>
            <person name="Rose M."/>
            <person name="Hauf J."/>
            <person name="Koetter P."/>
            <person name="Berneiser S."/>
            <person name="Hempel S."/>
            <person name="Feldpausch M."/>
            <person name="Lamberth S."/>
            <person name="Van den Daele H."/>
            <person name="De Keyser A."/>
            <person name="Buysshaert C."/>
            <person name="Gielen J."/>
            <person name="Villarroel R."/>
            <person name="De Clercq R."/>
            <person name="van Montagu M."/>
            <person name="Rogers J."/>
            <person name="Cronin A."/>
            <person name="Quail M.A."/>
            <person name="Bray-Allen S."/>
            <person name="Clark L."/>
            <person name="Doggett J."/>
            <person name="Hall S."/>
            <person name="Kay M."/>
            <person name="Lennard N."/>
            <person name="McLay K."/>
            <person name="Mayes R."/>
            <person name="Pettett A."/>
            <person name="Rajandream M.A."/>
            <person name="Lyne M."/>
            <person name="Benes V."/>
            <person name="Rechmann S."/>
            <person name="Borkova D."/>
            <person name="Bloecker H."/>
            <person name="Scharfe M."/>
            <person name="Grimm M."/>
            <person name="Loehnert T.-H."/>
            <person name="Dose S."/>
            <person name="de Haan M."/>
            <person name="Maarse A.C."/>
            <person name="Schaefer M."/>
            <person name="Mueller-Auer S."/>
            <person name="Gabel C."/>
            <person name="Fuchs M."/>
            <person name="Fartmann B."/>
            <person name="Granderath K."/>
            <person name="Dauner D."/>
            <person name="Herzl A."/>
            <person name="Neumann S."/>
            <person name="Argiriou A."/>
            <person name="Vitale D."/>
            <person name="Liguori R."/>
            <person name="Piravandi E."/>
            <person name="Massenet O."/>
            <person name="Quigley F."/>
            <person name="Clabauld G."/>
            <person name="Muendlein A."/>
            <person name="Felber R."/>
            <person name="Schnabl S."/>
            <person name="Hiller R."/>
            <person name="Schmidt W."/>
            <person name="Lecharny A."/>
            <person name="Aubourg S."/>
            <person name="Chefdor F."/>
            <person name="Cooke R."/>
            <person name="Berger C."/>
            <person name="Monfort A."/>
            <person name="Casacuberta E."/>
            <person name="Gibbons T."/>
            <person name="Weber N."/>
            <person name="Vandenbol M."/>
            <person name="Bargues M."/>
            <person name="Terol J."/>
            <person name="Torres A."/>
            <person name="Perez-Perez A."/>
            <person name="Purnelle B."/>
            <person name="Bent E."/>
            <person name="Johnson S."/>
            <person name="Tacon D."/>
            <person name="Jesse T."/>
            <person name="Heijnen L."/>
            <person name="Schwarz S."/>
            <person name="Scholler P."/>
            <person name="Heber S."/>
            <person name="Francs P."/>
            <person name="Bielke C."/>
            <person name="Frishman D."/>
            <person name="Haase D."/>
            <person name="Lemcke K."/>
            <person name="Mewes H.-W."/>
            <person name="Stocker S."/>
            <person name="Zaccaria P."/>
            <person name="Bevan M."/>
            <person name="Wilson R.K."/>
            <person name="de la Bastide M."/>
            <person name="Habermann K."/>
            <person name="Parnell L."/>
            <person name="Dedhia N."/>
            <person name="Gnoj L."/>
            <person name="Schutz K."/>
            <person name="Huang E."/>
            <person name="Spiegel L."/>
            <person name="Sekhon M."/>
            <person name="Murray J."/>
            <person name="Sheet P."/>
            <person name="Cordes M."/>
            <person name="Abu-Threideh J."/>
            <person name="Stoneking T."/>
            <person name="Kalicki J."/>
            <person name="Graves T."/>
            <person name="Harmon G."/>
            <person name="Edwards J."/>
            <person name="Latreille P."/>
            <person name="Courtney L."/>
            <person name="Cloud J."/>
            <person name="Abbott A."/>
            <person name="Scott K."/>
            <person name="Johnson D."/>
            <person name="Minx P."/>
            <person name="Bentley D."/>
            <person name="Fulton B."/>
            <person name="Miller N."/>
            <person name="Greco T."/>
            <person name="Kemp K."/>
            <person name="Kramer J."/>
            <person name="Fulton L."/>
            <person name="Mardis E."/>
            <person name="Dante M."/>
            <person name="Pepin K."/>
            <person name="Hillier L.W."/>
            <person name="Nelson J."/>
            <person name="Spieth J."/>
            <person name="Ryan E."/>
            <person name="Andrews S."/>
            <person name="Geisel C."/>
            <person name="Layman D."/>
            <person name="Du H."/>
            <person name="Ali J."/>
            <person name="Berghoff A."/>
            <person name="Jones K."/>
            <person name="Drone K."/>
            <person name="Cotton M."/>
            <person name="Joshu C."/>
            <person name="Antonoiu B."/>
            <person name="Zidanic M."/>
            <person name="Strong C."/>
            <person name="Sun H."/>
            <person name="Lamar B."/>
            <person name="Yordan C."/>
            <person name="Ma P."/>
            <person name="Zhong J."/>
            <person name="Preston R."/>
            <person name="Vil D."/>
            <person name="Shekher M."/>
            <person name="Matero A."/>
            <person name="Shah R."/>
            <person name="Swaby I.K."/>
            <person name="O'Shaughnessy A."/>
            <person name="Rodriguez M."/>
            <person name="Hoffman J."/>
            <person name="Till S."/>
            <person name="Granat S."/>
            <person name="Shohdy N."/>
            <person name="Hasegawa A."/>
            <person name="Hameed A."/>
            <person name="Lodhi M."/>
            <person name="Johnson A."/>
            <person name="Chen E."/>
            <person name="Marra M.A."/>
            <person name="Martienssen R."/>
            <person name="McCombie W.R."/>
        </authorList>
    </citation>
    <scope>NUCLEOTIDE SEQUENCE [LARGE SCALE GENOMIC DNA]</scope>
    <source>
        <strain>cv. Columbia</strain>
    </source>
</reference>
<reference key="3">
    <citation type="journal article" date="2017" name="Plant J.">
        <title>Araport11: a complete reannotation of the Arabidopsis thaliana reference genome.</title>
        <authorList>
            <person name="Cheng C.Y."/>
            <person name="Krishnakumar V."/>
            <person name="Chan A.P."/>
            <person name="Thibaud-Nissen F."/>
            <person name="Schobel S."/>
            <person name="Town C.D."/>
        </authorList>
    </citation>
    <scope>GENOME REANNOTATION</scope>
    <source>
        <strain>cv. Columbia</strain>
    </source>
</reference>
<dbReference type="EMBL" id="Z97341">
    <property type="protein sequence ID" value="CAB10432.1"/>
    <property type="status" value="ALT_SEQ"/>
    <property type="molecule type" value="Genomic_DNA"/>
</dbReference>
<dbReference type="EMBL" id="AL161544">
    <property type="protein sequence ID" value="CAB78698.1"/>
    <property type="status" value="ALT_SEQ"/>
    <property type="molecule type" value="Genomic_DNA"/>
</dbReference>
<dbReference type="EMBL" id="CP002687">
    <property type="protein sequence ID" value="AEE83769.1"/>
    <property type="molecule type" value="Genomic_DNA"/>
</dbReference>
<dbReference type="RefSeq" id="NP_567505.1">
    <property type="nucleotide sequence ID" value="NM_117755.1"/>
</dbReference>
<dbReference type="SMR" id="F4JMH9"/>
<dbReference type="STRING" id="3702.F4JMH9"/>
<dbReference type="PaxDb" id="3702-AT4G16560.1"/>
<dbReference type="EnsemblPlants" id="AT4G16560.1">
    <property type="protein sequence ID" value="AT4G16560.1"/>
    <property type="gene ID" value="AT4G16560"/>
</dbReference>
<dbReference type="GeneID" id="827355"/>
<dbReference type="Gramene" id="AT4G16560.1">
    <property type="protein sequence ID" value="AT4G16560.1"/>
    <property type="gene ID" value="AT4G16560"/>
</dbReference>
<dbReference type="KEGG" id="ath:AT4G16560"/>
<dbReference type="Araport" id="AT4G16560"/>
<dbReference type="TAIR" id="AT4G16560"/>
<dbReference type="HOGENOM" id="CLU_022104_2_0_1"/>
<dbReference type="InParanoid" id="F4JMH9"/>
<dbReference type="OMA" id="PYQANGP"/>
<dbReference type="PRO" id="PR:F4JMH9"/>
<dbReference type="Proteomes" id="UP000006548">
    <property type="component" value="Chromosome 4"/>
</dbReference>
<dbReference type="CDD" id="cd00298">
    <property type="entry name" value="ACD_sHsps_p23-like"/>
    <property type="match status" value="1"/>
</dbReference>
<dbReference type="InterPro" id="IPR002068">
    <property type="entry name" value="A-crystallin/Hsp20_dom"/>
</dbReference>
<dbReference type="InterPro" id="IPR044656">
    <property type="entry name" value="HSP14.7/HSP23.5/HSP23.6-like"/>
</dbReference>
<dbReference type="InterPro" id="IPR008978">
    <property type="entry name" value="HSP20-like_chaperone"/>
</dbReference>
<dbReference type="PANTHER" id="PTHR46991">
    <property type="entry name" value="23.5 KDA HEAT SHOCK PROTEIN, MITOCHONDRIAL"/>
    <property type="match status" value="1"/>
</dbReference>
<dbReference type="PANTHER" id="PTHR46991:SF37">
    <property type="entry name" value="57 KDA HEAT SHOCK PROTEIN-RELATED"/>
    <property type="match status" value="1"/>
</dbReference>
<dbReference type="SUPFAM" id="SSF49764">
    <property type="entry name" value="HSP20-like chaperones"/>
    <property type="match status" value="2"/>
</dbReference>
<dbReference type="PROSITE" id="PS01031">
    <property type="entry name" value="SHSP"/>
    <property type="match status" value="2"/>
</dbReference>
<sequence length="532" mass="57521">MSIPHIAPVPHPRDGYYATNNPYQVNGPKGFTEFKYLEETHDLFVRLDFPGIQKESVIILLEPSKKAVIVTGEAPKESKHDSSHRKYGTATGLICDCCEISNIQCFVGDGVVRLILSKQKINLRVPIFCSCKITNLQNVLFFCLIFVGGARMPTDASPNIIRGYNPEDLSVELLLETSLRCFSIVNVSDIFHGFVLLIPIVAVAGGHPLAHLRGLNPEGCRGTDPFDPAFTGPTIRPHPSVLEGSTSAYETKQLSNGGLYLRIDMPGVPSDGFIVAVDGNGVVTIMGRAPATMHDSNGFYAMNNPYQANGPKGFAEFNQERDCGYPLTLLEPSKKAVTVTGDAAKSSKHDASNRNNNIHTFVEDGVVRLILSKKKIYPHAPNFCSFGGATIPTGDAPVADGTPYVNLLAHFRGLIPKGRRCTDPGDPAFTGPVVLPHPSVLEGPMMPYETKQLSNGGLYMRVDMPGVPSEKFMVAVDGDGVVTIMGRAPVTMHDTSGRTYVAKVANVPRGYDGGRIKLVPKHGVIRLTIPSN</sequence>
<gene>
    <name evidence="3" type="ordered locus">At4g16560</name>
    <name evidence="4" type="ORF">dl4305c</name>
</gene>
<name>HSP57_ARATH</name>
<organism>
    <name type="scientific">Arabidopsis thaliana</name>
    <name type="common">Mouse-ear cress</name>
    <dbReference type="NCBI Taxonomy" id="3702"/>
    <lineage>
        <taxon>Eukaryota</taxon>
        <taxon>Viridiplantae</taxon>
        <taxon>Streptophyta</taxon>
        <taxon>Embryophyta</taxon>
        <taxon>Tracheophyta</taxon>
        <taxon>Spermatophyta</taxon>
        <taxon>Magnoliopsida</taxon>
        <taxon>eudicotyledons</taxon>
        <taxon>Gunneridae</taxon>
        <taxon>Pentapetalae</taxon>
        <taxon>rosids</taxon>
        <taxon>malvids</taxon>
        <taxon>Brassicales</taxon>
        <taxon>Brassicaceae</taxon>
        <taxon>Camelineae</taxon>
        <taxon>Arabidopsis</taxon>
    </lineage>
</organism>
<comment type="similarity">
    <text evidence="1 2">Belongs to the small heat shock protein (HSP20) family.</text>
</comment>
<comment type="sequence caution" evidence="2">
    <conflict type="erroneous gene model prediction">
        <sequence resource="EMBL-CDS" id="CAB10432"/>
    </conflict>
    <text>The predicted gene has been split into 3 genes: At4g16560, At4g16563 and At4g16566.</text>
</comment>
<comment type="sequence caution" evidence="2">
    <conflict type="erroneous gene model prediction">
        <sequence resource="EMBL-CDS" id="CAB78698"/>
    </conflict>
    <text>The predicted gene has been split into 3 genes: At4g16560, At4g16563 and At4g16566.</text>
</comment>
<feature type="chain" id="PRO_0000436750" description="Putative 57 kDa heat shock protein">
    <location>
        <begin position="1"/>
        <end position="532"/>
    </location>
</feature>
<feature type="domain" description="sHSP 1" evidence="1">
    <location>
        <begin position="25"/>
        <end position="134"/>
    </location>
</feature>
<feature type="domain" description="sHSP 2" evidence="1">
    <location>
        <begin position="439"/>
        <end position="532"/>
    </location>
</feature>
<keyword id="KW-1185">Reference proteome</keyword>
<accession>F4JMH9</accession>